<evidence type="ECO:0000250" key="1">
    <source>
        <dbReference type="UniProtKB" id="P53934"/>
    </source>
</evidence>
<evidence type="ECO:0000250" key="2">
    <source>
        <dbReference type="UniProtKB" id="Q8N4J0"/>
    </source>
</evidence>
<evidence type="ECO:0000269" key="3">
    <source>
    </source>
</evidence>
<evidence type="ECO:0000305" key="4"/>
<sequence length="373" mass="43335">MEYDEEEVKVLKEVLSAFFLYRQYAHTITQQKRKSMSRLSFEHKDLLLQDSDNNFLKHLSRIDQCIEQNSVLAEAIANAAIPVFCSDFDQNELFHVNVDMMQKVSSTLKQIARDWSTECVEERRTTYAPFIEELNSLFPSDSIDRSKIRVLVPGSGLGRLAFDIAVEGFACQGNEFSYFMLLTSHFILNCVKQENQFLVYPYIHSFSNHVMRDDQVRSLNIPDAVPSQYLRNSQNFSMAAGDFLEVYGTEESRDSFQVVATCFFIDTTKNILDYLDTIKNCLVDGGYWINLGPLLYHFESEGTSNSNSDSQQQPFVELTLEQLFYVMDSMGFEVLKHNSVDTTYMGDKRSMLEWIYHPHYWVCRLQKSKLRFQ</sequence>
<reference key="1">
    <citation type="journal article" date="2002" name="Nature">
        <title>The genome sequence of Schizosaccharomyces pombe.</title>
        <authorList>
            <person name="Wood V."/>
            <person name="Gwilliam R."/>
            <person name="Rajandream M.A."/>
            <person name="Lyne M.H."/>
            <person name="Lyne R."/>
            <person name="Stewart A."/>
            <person name="Sgouros J.G."/>
            <person name="Peat N."/>
            <person name="Hayles J."/>
            <person name="Baker S.G."/>
            <person name="Basham D."/>
            <person name="Bowman S."/>
            <person name="Brooks K."/>
            <person name="Brown D."/>
            <person name="Brown S."/>
            <person name="Chillingworth T."/>
            <person name="Churcher C.M."/>
            <person name="Collins M."/>
            <person name="Connor R."/>
            <person name="Cronin A."/>
            <person name="Davis P."/>
            <person name="Feltwell T."/>
            <person name="Fraser A."/>
            <person name="Gentles S."/>
            <person name="Goble A."/>
            <person name="Hamlin N."/>
            <person name="Harris D.E."/>
            <person name="Hidalgo J."/>
            <person name="Hodgson G."/>
            <person name="Holroyd S."/>
            <person name="Hornsby T."/>
            <person name="Howarth S."/>
            <person name="Huckle E.J."/>
            <person name="Hunt S."/>
            <person name="Jagels K."/>
            <person name="James K.D."/>
            <person name="Jones L."/>
            <person name="Jones M."/>
            <person name="Leather S."/>
            <person name="McDonald S."/>
            <person name="McLean J."/>
            <person name="Mooney P."/>
            <person name="Moule S."/>
            <person name="Mungall K.L."/>
            <person name="Murphy L.D."/>
            <person name="Niblett D."/>
            <person name="Odell C."/>
            <person name="Oliver K."/>
            <person name="O'Neil S."/>
            <person name="Pearson D."/>
            <person name="Quail M.A."/>
            <person name="Rabbinowitsch E."/>
            <person name="Rutherford K.M."/>
            <person name="Rutter S."/>
            <person name="Saunders D."/>
            <person name="Seeger K."/>
            <person name="Sharp S."/>
            <person name="Skelton J."/>
            <person name="Simmonds M.N."/>
            <person name="Squares R."/>
            <person name="Squares S."/>
            <person name="Stevens K."/>
            <person name="Taylor K."/>
            <person name="Taylor R.G."/>
            <person name="Tivey A."/>
            <person name="Walsh S.V."/>
            <person name="Warren T."/>
            <person name="Whitehead S."/>
            <person name="Woodward J.R."/>
            <person name="Volckaert G."/>
            <person name="Aert R."/>
            <person name="Robben J."/>
            <person name="Grymonprez B."/>
            <person name="Weltjens I."/>
            <person name="Vanstreels E."/>
            <person name="Rieger M."/>
            <person name="Schaefer M."/>
            <person name="Mueller-Auer S."/>
            <person name="Gabel C."/>
            <person name="Fuchs M."/>
            <person name="Duesterhoeft A."/>
            <person name="Fritzc C."/>
            <person name="Holzer E."/>
            <person name="Moestl D."/>
            <person name="Hilbert H."/>
            <person name="Borzym K."/>
            <person name="Langer I."/>
            <person name="Beck A."/>
            <person name="Lehrach H."/>
            <person name="Reinhardt R."/>
            <person name="Pohl T.M."/>
            <person name="Eger P."/>
            <person name="Zimmermann W."/>
            <person name="Wedler H."/>
            <person name="Wambutt R."/>
            <person name="Purnelle B."/>
            <person name="Goffeau A."/>
            <person name="Cadieu E."/>
            <person name="Dreano S."/>
            <person name="Gloux S."/>
            <person name="Lelaure V."/>
            <person name="Mottier S."/>
            <person name="Galibert F."/>
            <person name="Aves S.J."/>
            <person name="Xiang Z."/>
            <person name="Hunt C."/>
            <person name="Moore K."/>
            <person name="Hurst S.M."/>
            <person name="Lucas M."/>
            <person name="Rochet M."/>
            <person name="Gaillardin C."/>
            <person name="Tallada V.A."/>
            <person name="Garzon A."/>
            <person name="Thode G."/>
            <person name="Daga R.R."/>
            <person name="Cruzado L."/>
            <person name="Jimenez J."/>
            <person name="Sanchez M."/>
            <person name="del Rey F."/>
            <person name="Benito J."/>
            <person name="Dominguez A."/>
            <person name="Revuelta J.L."/>
            <person name="Moreno S."/>
            <person name="Armstrong J."/>
            <person name="Forsburg S.L."/>
            <person name="Cerutti L."/>
            <person name="Lowe T."/>
            <person name="McCombie W.R."/>
            <person name="Paulsen I."/>
            <person name="Potashkin J."/>
            <person name="Shpakovski G.V."/>
            <person name="Ussery D."/>
            <person name="Barrell B.G."/>
            <person name="Nurse P."/>
        </authorList>
    </citation>
    <scope>NUCLEOTIDE SEQUENCE [LARGE SCALE GENOMIC DNA]</scope>
    <source>
        <strain>972 / ATCC 24843</strain>
    </source>
</reference>
<reference key="2">
    <citation type="journal article" date="2006" name="Nat. Biotechnol.">
        <title>ORFeome cloning and global analysis of protein localization in the fission yeast Schizosaccharomyces pombe.</title>
        <authorList>
            <person name="Matsuyama A."/>
            <person name="Arai R."/>
            <person name="Yashiroda Y."/>
            <person name="Shirai A."/>
            <person name="Kamata A."/>
            <person name="Sekido S."/>
            <person name="Kobayashi Y."/>
            <person name="Hashimoto A."/>
            <person name="Hamamoto M."/>
            <person name="Hiraoka Y."/>
            <person name="Horinouchi S."/>
            <person name="Yoshida M."/>
        </authorList>
    </citation>
    <scope>SUBCELLULAR LOCATION [LARGE SCALE ANALYSIS]</scope>
</reference>
<dbReference type="EC" id="2.1.1.22" evidence="1"/>
<dbReference type="EMBL" id="CU329671">
    <property type="protein sequence ID" value="CAB39802.1"/>
    <property type="molecule type" value="Genomic_DNA"/>
</dbReference>
<dbReference type="PIR" id="T39689">
    <property type="entry name" value="T39689"/>
</dbReference>
<dbReference type="RefSeq" id="NP_596290.1">
    <property type="nucleotide sequence ID" value="NM_001022212.2"/>
</dbReference>
<dbReference type="SMR" id="Q9Y7J3"/>
<dbReference type="BioGRID" id="276669">
    <property type="interactions" value="2"/>
</dbReference>
<dbReference type="FunCoup" id="Q9Y7J3">
    <property type="interactions" value="216"/>
</dbReference>
<dbReference type="STRING" id="284812.Q9Y7J3"/>
<dbReference type="iPTMnet" id="Q9Y7J3"/>
<dbReference type="PaxDb" id="4896-SPBC1778.07.1"/>
<dbReference type="EnsemblFungi" id="SPBC1778.07.1">
    <property type="protein sequence ID" value="SPBC1778.07.1:pep"/>
    <property type="gene ID" value="SPBC1778.07"/>
</dbReference>
<dbReference type="KEGG" id="spo:2540132"/>
<dbReference type="PomBase" id="SPBC1778.07"/>
<dbReference type="VEuPathDB" id="FungiDB:SPBC1778.07"/>
<dbReference type="eggNOG" id="KOG2798">
    <property type="taxonomic scope" value="Eukaryota"/>
</dbReference>
<dbReference type="HOGENOM" id="CLU_030612_1_2_1"/>
<dbReference type="InParanoid" id="Q9Y7J3"/>
<dbReference type="OMA" id="GSMSMCA"/>
<dbReference type="PhylomeDB" id="Q9Y7J3"/>
<dbReference type="Reactome" id="R-SPO-70921">
    <property type="pathway name" value="Histidine catabolism"/>
</dbReference>
<dbReference type="PRO" id="PR:Q9Y7J3"/>
<dbReference type="Proteomes" id="UP000002485">
    <property type="component" value="Chromosome II"/>
</dbReference>
<dbReference type="GO" id="GO:0005829">
    <property type="term" value="C:cytosol"/>
    <property type="evidence" value="ECO:0007005"/>
    <property type="project" value="PomBase"/>
</dbReference>
<dbReference type="GO" id="GO:0005634">
    <property type="term" value="C:nucleus"/>
    <property type="evidence" value="ECO:0007005"/>
    <property type="project" value="PomBase"/>
</dbReference>
<dbReference type="GO" id="GO:0030735">
    <property type="term" value="F:carnosine N-methyltransferase activity"/>
    <property type="evidence" value="ECO:0007669"/>
    <property type="project" value="UniProtKB-EC"/>
</dbReference>
<dbReference type="GO" id="GO:0008757">
    <property type="term" value="F:S-adenosylmethionine-dependent methyltransferase activity"/>
    <property type="evidence" value="ECO:0000318"/>
    <property type="project" value="GO_Central"/>
</dbReference>
<dbReference type="GO" id="GO:0032259">
    <property type="term" value="P:methylation"/>
    <property type="evidence" value="ECO:0007669"/>
    <property type="project" value="UniProtKB-KW"/>
</dbReference>
<dbReference type="Gene3D" id="3.40.50.150">
    <property type="entry name" value="Vaccinia Virus protein VP39"/>
    <property type="match status" value="1"/>
</dbReference>
<dbReference type="InterPro" id="IPR012901">
    <property type="entry name" value="CARME"/>
</dbReference>
<dbReference type="InterPro" id="IPR029063">
    <property type="entry name" value="SAM-dependent_MTases_sf"/>
</dbReference>
<dbReference type="PANTHER" id="PTHR12303">
    <property type="entry name" value="CARNOSINE N-METHYLTRANSFERASE"/>
    <property type="match status" value="1"/>
</dbReference>
<dbReference type="PANTHER" id="PTHR12303:SF6">
    <property type="entry name" value="CARNOSINE N-METHYLTRANSFERASE"/>
    <property type="match status" value="1"/>
</dbReference>
<dbReference type="Pfam" id="PF07942">
    <property type="entry name" value="CARME"/>
    <property type="match status" value="1"/>
</dbReference>
<dbReference type="SMART" id="SM01296">
    <property type="entry name" value="N2227"/>
    <property type="match status" value="1"/>
</dbReference>
<dbReference type="SUPFAM" id="SSF53335">
    <property type="entry name" value="S-adenosyl-L-methionine-dependent methyltransferases"/>
    <property type="match status" value="1"/>
</dbReference>
<organism>
    <name type="scientific">Schizosaccharomyces pombe (strain 972 / ATCC 24843)</name>
    <name type="common">Fission yeast</name>
    <dbReference type="NCBI Taxonomy" id="284812"/>
    <lineage>
        <taxon>Eukaryota</taxon>
        <taxon>Fungi</taxon>
        <taxon>Dikarya</taxon>
        <taxon>Ascomycota</taxon>
        <taxon>Taphrinomycotina</taxon>
        <taxon>Schizosaccharomycetes</taxon>
        <taxon>Schizosaccharomycetales</taxon>
        <taxon>Schizosaccharomycetaceae</taxon>
        <taxon>Schizosaccharomyces</taxon>
    </lineage>
</organism>
<feature type="chain" id="PRO_0000337252" description="Carnosine N-methyltransferase">
    <location>
        <begin position="1"/>
        <end position="373"/>
    </location>
</feature>
<feature type="binding site" evidence="2">
    <location>
        <position position="110"/>
    </location>
    <ligand>
        <name>S-adenosyl-L-methionine</name>
        <dbReference type="ChEBI" id="CHEBI:59789"/>
    </ligand>
</feature>
<feature type="binding site" evidence="2">
    <location>
        <position position="113"/>
    </location>
    <ligand>
        <name>S-adenosyl-L-methionine</name>
        <dbReference type="ChEBI" id="CHEBI:59789"/>
    </ligand>
</feature>
<feature type="binding site" evidence="2">
    <location>
        <position position="154"/>
    </location>
    <ligand>
        <name>S-adenosyl-L-methionine</name>
        <dbReference type="ChEBI" id="CHEBI:59789"/>
    </ligand>
</feature>
<feature type="binding site" evidence="2">
    <location>
        <position position="175"/>
    </location>
    <ligand>
        <name>S-adenosyl-L-methionine</name>
        <dbReference type="ChEBI" id="CHEBI:59789"/>
    </ligand>
</feature>
<feature type="binding site" evidence="2">
    <location>
        <position position="242"/>
    </location>
    <ligand>
        <name>S-adenosyl-L-methionine</name>
        <dbReference type="ChEBI" id="CHEBI:59789"/>
    </ligand>
</feature>
<feature type="binding site" evidence="2">
    <location>
        <position position="243"/>
    </location>
    <ligand>
        <name>S-adenosyl-L-methionine</name>
        <dbReference type="ChEBI" id="CHEBI:59789"/>
    </ligand>
</feature>
<feature type="binding site" evidence="2">
    <location>
        <position position="262"/>
    </location>
    <ligand>
        <name>S-adenosyl-L-methionine</name>
        <dbReference type="ChEBI" id="CHEBI:59789"/>
    </ligand>
</feature>
<feature type="binding site" evidence="2">
    <location>
        <position position="266"/>
    </location>
    <ligand>
        <name>carnosine</name>
        <dbReference type="ChEBI" id="CHEBI:57485"/>
    </ligand>
</feature>
<feature type="binding site" evidence="2">
    <location>
        <position position="274"/>
    </location>
    <ligand>
        <name>S-adenosyl-L-methionine</name>
        <dbReference type="ChEBI" id="CHEBI:59789"/>
    </ligand>
</feature>
<feature type="binding site" evidence="2">
    <location>
        <position position="297"/>
    </location>
    <ligand>
        <name>carnosine</name>
        <dbReference type="ChEBI" id="CHEBI:57485"/>
    </ligand>
</feature>
<feature type="binding site" evidence="2">
    <location>
        <position position="356"/>
    </location>
    <ligand>
        <name>carnosine</name>
        <dbReference type="ChEBI" id="CHEBI:57485"/>
    </ligand>
</feature>
<comment type="function">
    <text evidence="1">N-methyltransferase that mediates the formation of anserine (beta-alanyl-N(Pi)-methyl-L-histidine) from carnosine. Also methylates other L-histidine-containing di- and tripeptides such as Gly-Gly-His, Gly-His and homocarnosine (GABA-His).</text>
</comment>
<comment type="catalytic activity">
    <reaction evidence="1">
        <text>carnosine + S-adenosyl-L-methionine = anserine + S-adenosyl-L-homocysteine + H(+)</text>
        <dbReference type="Rhea" id="RHEA:14205"/>
        <dbReference type="ChEBI" id="CHEBI:15378"/>
        <dbReference type="ChEBI" id="CHEBI:57485"/>
        <dbReference type="ChEBI" id="CHEBI:57856"/>
        <dbReference type="ChEBI" id="CHEBI:58445"/>
        <dbReference type="ChEBI" id="CHEBI:59789"/>
        <dbReference type="EC" id="2.1.1.22"/>
    </reaction>
</comment>
<comment type="subcellular location">
    <subcellularLocation>
        <location evidence="3">Cytoplasm</location>
    </subcellularLocation>
    <subcellularLocation>
        <location evidence="3">Nucleus</location>
    </subcellularLocation>
</comment>
<comment type="similarity">
    <text evidence="4">Belongs to the carnosine N-methyltransferase family.</text>
</comment>
<name>CARME_SCHPO</name>
<proteinExistence type="inferred from homology"/>
<protein>
    <recommendedName>
        <fullName evidence="1">Carnosine N-methyltransferase</fullName>
        <ecNumber evidence="1">2.1.1.22</ecNumber>
    </recommendedName>
</protein>
<gene>
    <name type="ORF">SPBC1778.07</name>
</gene>
<accession>Q9Y7J3</accession>
<keyword id="KW-0963">Cytoplasm</keyword>
<keyword id="KW-0489">Methyltransferase</keyword>
<keyword id="KW-0539">Nucleus</keyword>
<keyword id="KW-1185">Reference proteome</keyword>
<keyword id="KW-0949">S-adenosyl-L-methionine</keyword>
<keyword id="KW-0808">Transferase</keyword>